<proteinExistence type="inferred from homology"/>
<accession>A2C0F7</accession>
<dbReference type="EMBL" id="CP000553">
    <property type="protein sequence ID" value="ABM74967.1"/>
    <property type="molecule type" value="Genomic_DNA"/>
</dbReference>
<dbReference type="RefSeq" id="WP_011294324.1">
    <property type="nucleotide sequence ID" value="NC_008819.1"/>
</dbReference>
<dbReference type="SMR" id="A2C0F7"/>
<dbReference type="KEGG" id="pme:NATL1_04031"/>
<dbReference type="eggNOG" id="COG1327">
    <property type="taxonomic scope" value="Bacteria"/>
</dbReference>
<dbReference type="HOGENOM" id="CLU_108412_0_0_3"/>
<dbReference type="Proteomes" id="UP000002592">
    <property type="component" value="Chromosome"/>
</dbReference>
<dbReference type="GO" id="GO:0005524">
    <property type="term" value="F:ATP binding"/>
    <property type="evidence" value="ECO:0007669"/>
    <property type="project" value="UniProtKB-KW"/>
</dbReference>
<dbReference type="GO" id="GO:0003677">
    <property type="term" value="F:DNA binding"/>
    <property type="evidence" value="ECO:0007669"/>
    <property type="project" value="UniProtKB-KW"/>
</dbReference>
<dbReference type="GO" id="GO:0008270">
    <property type="term" value="F:zinc ion binding"/>
    <property type="evidence" value="ECO:0007669"/>
    <property type="project" value="UniProtKB-UniRule"/>
</dbReference>
<dbReference type="GO" id="GO:0045892">
    <property type="term" value="P:negative regulation of DNA-templated transcription"/>
    <property type="evidence" value="ECO:0007669"/>
    <property type="project" value="UniProtKB-UniRule"/>
</dbReference>
<dbReference type="HAMAP" id="MF_00440">
    <property type="entry name" value="NrdR"/>
    <property type="match status" value="1"/>
</dbReference>
<dbReference type="InterPro" id="IPR005144">
    <property type="entry name" value="ATP-cone_dom"/>
</dbReference>
<dbReference type="InterPro" id="IPR055173">
    <property type="entry name" value="NrdR-like_N"/>
</dbReference>
<dbReference type="InterPro" id="IPR003796">
    <property type="entry name" value="RNR_NrdR-like"/>
</dbReference>
<dbReference type="NCBIfam" id="TIGR00244">
    <property type="entry name" value="transcriptional regulator NrdR"/>
    <property type="match status" value="1"/>
</dbReference>
<dbReference type="PANTHER" id="PTHR30455">
    <property type="entry name" value="TRANSCRIPTIONAL REPRESSOR NRDR"/>
    <property type="match status" value="1"/>
</dbReference>
<dbReference type="PANTHER" id="PTHR30455:SF2">
    <property type="entry name" value="TRANSCRIPTIONAL REPRESSOR NRDR"/>
    <property type="match status" value="1"/>
</dbReference>
<dbReference type="Pfam" id="PF03477">
    <property type="entry name" value="ATP-cone"/>
    <property type="match status" value="1"/>
</dbReference>
<dbReference type="Pfam" id="PF22811">
    <property type="entry name" value="Zn_ribbon_NrdR"/>
    <property type="match status" value="1"/>
</dbReference>
<dbReference type="PROSITE" id="PS51161">
    <property type="entry name" value="ATP_CONE"/>
    <property type="match status" value="1"/>
</dbReference>
<sequence length="159" mass="18312">MQCPSCQNTDSRVLESRSADSGRSVRRRRECLNCDFRFTTYERVETTPINVLKRSGAKELFNRSKIINGLNRACEKTLIHGSKIEFIVDEIELELHQGVCKEIKSIEIGEMVLTHLKDINEVAYIRFASVYRQFNGINDFMKTLEALKPIKKEQLASVI</sequence>
<feature type="chain" id="PRO_1000080796" description="Transcriptional repressor NrdR">
    <location>
        <begin position="1"/>
        <end position="159"/>
    </location>
</feature>
<feature type="domain" description="ATP-cone" evidence="1">
    <location>
        <begin position="49"/>
        <end position="139"/>
    </location>
</feature>
<feature type="zinc finger region" evidence="1">
    <location>
        <begin position="3"/>
        <end position="34"/>
    </location>
</feature>
<feature type="region of interest" description="Disordered" evidence="2">
    <location>
        <begin position="1"/>
        <end position="20"/>
    </location>
</feature>
<feature type="compositionally biased region" description="Polar residues" evidence="2">
    <location>
        <begin position="1"/>
        <end position="11"/>
    </location>
</feature>
<protein>
    <recommendedName>
        <fullName evidence="1">Transcriptional repressor NrdR</fullName>
    </recommendedName>
</protein>
<comment type="function">
    <text evidence="1">Negatively regulates transcription of bacterial ribonucleotide reductase nrd genes and operons by binding to NrdR-boxes.</text>
</comment>
<comment type="cofactor">
    <cofactor evidence="1">
        <name>Zn(2+)</name>
        <dbReference type="ChEBI" id="CHEBI:29105"/>
    </cofactor>
    <text evidence="1">Binds 1 zinc ion.</text>
</comment>
<comment type="similarity">
    <text evidence="1">Belongs to the NrdR family.</text>
</comment>
<reference key="1">
    <citation type="journal article" date="2007" name="PLoS Genet.">
        <title>Patterns and implications of gene gain and loss in the evolution of Prochlorococcus.</title>
        <authorList>
            <person name="Kettler G.C."/>
            <person name="Martiny A.C."/>
            <person name="Huang K."/>
            <person name="Zucker J."/>
            <person name="Coleman M.L."/>
            <person name="Rodrigue S."/>
            <person name="Chen F."/>
            <person name="Lapidus A."/>
            <person name="Ferriera S."/>
            <person name="Johnson J."/>
            <person name="Steglich C."/>
            <person name="Church G.M."/>
            <person name="Richardson P."/>
            <person name="Chisholm S.W."/>
        </authorList>
    </citation>
    <scope>NUCLEOTIDE SEQUENCE [LARGE SCALE GENOMIC DNA]</scope>
    <source>
        <strain>NATL1A</strain>
    </source>
</reference>
<evidence type="ECO:0000255" key="1">
    <source>
        <dbReference type="HAMAP-Rule" id="MF_00440"/>
    </source>
</evidence>
<evidence type="ECO:0000256" key="2">
    <source>
        <dbReference type="SAM" id="MobiDB-lite"/>
    </source>
</evidence>
<name>NRDR_PROM1</name>
<organism>
    <name type="scientific">Prochlorococcus marinus (strain NATL1A)</name>
    <dbReference type="NCBI Taxonomy" id="167555"/>
    <lineage>
        <taxon>Bacteria</taxon>
        <taxon>Bacillati</taxon>
        <taxon>Cyanobacteriota</taxon>
        <taxon>Cyanophyceae</taxon>
        <taxon>Synechococcales</taxon>
        <taxon>Prochlorococcaceae</taxon>
        <taxon>Prochlorococcus</taxon>
    </lineage>
</organism>
<gene>
    <name evidence="1" type="primary">nrdR</name>
    <name type="ordered locus">NATL1_04031</name>
</gene>
<keyword id="KW-0067">ATP-binding</keyword>
<keyword id="KW-0238">DNA-binding</keyword>
<keyword id="KW-0479">Metal-binding</keyword>
<keyword id="KW-0547">Nucleotide-binding</keyword>
<keyword id="KW-0678">Repressor</keyword>
<keyword id="KW-0804">Transcription</keyword>
<keyword id="KW-0805">Transcription regulation</keyword>
<keyword id="KW-0862">Zinc</keyword>
<keyword id="KW-0863">Zinc-finger</keyword>